<feature type="chain" id="PRO_0000091666" description="3-hydroxyacyl-[acyl-carrier-protein] dehydratase FabZ">
    <location>
        <begin position="1"/>
        <end position="141"/>
    </location>
</feature>
<feature type="active site" evidence="1">
    <location>
        <position position="49"/>
    </location>
</feature>
<protein>
    <recommendedName>
        <fullName evidence="1">3-hydroxyacyl-[acyl-carrier-protein] dehydratase FabZ</fullName>
        <ecNumber evidence="1">4.2.1.59</ecNumber>
    </recommendedName>
    <alternativeName>
        <fullName evidence="1">(3R)-hydroxymyristoyl-[acyl-carrier-protein] dehydratase</fullName>
        <shortName evidence="1">(3R)-hydroxymyristoyl-ACP dehydrase</shortName>
    </alternativeName>
    <alternativeName>
        <fullName evidence="1">Beta-hydroxyacyl-ACP dehydratase</fullName>
    </alternativeName>
</protein>
<comment type="function">
    <text evidence="1">Involved in unsaturated fatty acids biosynthesis. Catalyzes the dehydration of short chain beta-hydroxyacyl-ACPs and long chain saturated and unsaturated beta-hydroxyacyl-ACPs.</text>
</comment>
<comment type="catalytic activity">
    <reaction evidence="1">
        <text>a (3R)-hydroxyacyl-[ACP] = a (2E)-enoyl-[ACP] + H2O</text>
        <dbReference type="Rhea" id="RHEA:13097"/>
        <dbReference type="Rhea" id="RHEA-COMP:9925"/>
        <dbReference type="Rhea" id="RHEA-COMP:9945"/>
        <dbReference type="ChEBI" id="CHEBI:15377"/>
        <dbReference type="ChEBI" id="CHEBI:78784"/>
        <dbReference type="ChEBI" id="CHEBI:78827"/>
        <dbReference type="EC" id="4.2.1.59"/>
    </reaction>
</comment>
<comment type="subcellular location">
    <subcellularLocation>
        <location evidence="1">Cytoplasm</location>
    </subcellularLocation>
</comment>
<comment type="similarity">
    <text evidence="1">Belongs to the thioester dehydratase family. FabZ subfamily.</text>
</comment>
<organism>
    <name type="scientific">Clostridium acetobutylicum (strain ATCC 824 / DSM 792 / JCM 1419 / IAM 19013 / LMG 5710 / NBRC 13948 / NRRL B-527 / VKM B-1787 / 2291 / W)</name>
    <dbReference type="NCBI Taxonomy" id="272562"/>
    <lineage>
        <taxon>Bacteria</taxon>
        <taxon>Bacillati</taxon>
        <taxon>Bacillota</taxon>
        <taxon>Clostridia</taxon>
        <taxon>Eubacteriales</taxon>
        <taxon>Clostridiaceae</taxon>
        <taxon>Clostridium</taxon>
    </lineage>
</organism>
<sequence>MSLSIEQIMEIIPHRYPMLLVDRVEEIEPGKRAVGYKNVTFNEQIFQGHYPGKPIMPGVLMIEALAQLGGVAILSLDKYKGKKPILGAVKNAKFRRMVVPGDVLKLEIEIVKVKGPAGIGKGIATVNGEKAVEAEITFMIV</sequence>
<dbReference type="EC" id="4.2.1.59" evidence="1"/>
<dbReference type="EMBL" id="AE001437">
    <property type="protein sequence ID" value="AAK81494.1"/>
    <property type="molecule type" value="Genomic_DNA"/>
</dbReference>
<dbReference type="PIR" id="C97338">
    <property type="entry name" value="C97338"/>
</dbReference>
<dbReference type="RefSeq" id="NP_350154.1">
    <property type="nucleotide sequence ID" value="NC_003030.1"/>
</dbReference>
<dbReference type="RefSeq" id="WP_010966834.1">
    <property type="nucleotide sequence ID" value="NC_003030.1"/>
</dbReference>
<dbReference type="SMR" id="Q97DA9"/>
<dbReference type="STRING" id="272562.CA_C3571"/>
<dbReference type="GeneID" id="45000061"/>
<dbReference type="KEGG" id="cac:CA_C3571"/>
<dbReference type="PATRIC" id="fig|272562.8.peg.3760"/>
<dbReference type="eggNOG" id="COG0764">
    <property type="taxonomic scope" value="Bacteria"/>
</dbReference>
<dbReference type="HOGENOM" id="CLU_078912_3_0_9"/>
<dbReference type="OrthoDB" id="9772788at2"/>
<dbReference type="Proteomes" id="UP000000814">
    <property type="component" value="Chromosome"/>
</dbReference>
<dbReference type="GO" id="GO:0005737">
    <property type="term" value="C:cytoplasm"/>
    <property type="evidence" value="ECO:0007669"/>
    <property type="project" value="UniProtKB-SubCell"/>
</dbReference>
<dbReference type="GO" id="GO:0016020">
    <property type="term" value="C:membrane"/>
    <property type="evidence" value="ECO:0007669"/>
    <property type="project" value="GOC"/>
</dbReference>
<dbReference type="GO" id="GO:0019171">
    <property type="term" value="F:(3R)-hydroxyacyl-[acyl-carrier-protein] dehydratase activity"/>
    <property type="evidence" value="ECO:0007669"/>
    <property type="project" value="UniProtKB-EC"/>
</dbReference>
<dbReference type="GO" id="GO:0006633">
    <property type="term" value="P:fatty acid biosynthetic process"/>
    <property type="evidence" value="ECO:0007669"/>
    <property type="project" value="UniProtKB-UniRule"/>
</dbReference>
<dbReference type="GO" id="GO:0009245">
    <property type="term" value="P:lipid A biosynthetic process"/>
    <property type="evidence" value="ECO:0007669"/>
    <property type="project" value="UniProtKB-UniRule"/>
</dbReference>
<dbReference type="CDD" id="cd01288">
    <property type="entry name" value="FabZ"/>
    <property type="match status" value="1"/>
</dbReference>
<dbReference type="FunFam" id="3.10.129.10:FF:000001">
    <property type="entry name" value="3-hydroxyacyl-[acyl-carrier-protein] dehydratase FabZ"/>
    <property type="match status" value="1"/>
</dbReference>
<dbReference type="Gene3D" id="3.10.129.10">
    <property type="entry name" value="Hotdog Thioesterase"/>
    <property type="match status" value="1"/>
</dbReference>
<dbReference type="HAMAP" id="MF_00406">
    <property type="entry name" value="FabZ"/>
    <property type="match status" value="1"/>
</dbReference>
<dbReference type="InterPro" id="IPR013114">
    <property type="entry name" value="FabA_FabZ"/>
</dbReference>
<dbReference type="InterPro" id="IPR010084">
    <property type="entry name" value="FabZ"/>
</dbReference>
<dbReference type="InterPro" id="IPR029069">
    <property type="entry name" value="HotDog_dom_sf"/>
</dbReference>
<dbReference type="NCBIfam" id="TIGR01750">
    <property type="entry name" value="fabZ"/>
    <property type="match status" value="1"/>
</dbReference>
<dbReference type="NCBIfam" id="NF000582">
    <property type="entry name" value="PRK00006.1"/>
    <property type="match status" value="1"/>
</dbReference>
<dbReference type="PANTHER" id="PTHR30272">
    <property type="entry name" value="3-HYDROXYACYL-[ACYL-CARRIER-PROTEIN] DEHYDRATASE"/>
    <property type="match status" value="1"/>
</dbReference>
<dbReference type="PANTHER" id="PTHR30272:SF1">
    <property type="entry name" value="3-HYDROXYACYL-[ACYL-CARRIER-PROTEIN] DEHYDRATASE"/>
    <property type="match status" value="1"/>
</dbReference>
<dbReference type="Pfam" id="PF07977">
    <property type="entry name" value="FabA"/>
    <property type="match status" value="1"/>
</dbReference>
<dbReference type="SUPFAM" id="SSF54637">
    <property type="entry name" value="Thioesterase/thiol ester dehydrase-isomerase"/>
    <property type="match status" value="1"/>
</dbReference>
<keyword id="KW-0963">Cytoplasm</keyword>
<keyword id="KW-0441">Lipid A biosynthesis</keyword>
<keyword id="KW-0444">Lipid biosynthesis</keyword>
<keyword id="KW-0443">Lipid metabolism</keyword>
<keyword id="KW-0456">Lyase</keyword>
<keyword id="KW-1185">Reference proteome</keyword>
<gene>
    <name evidence="1" type="primary">fabZ</name>
    <name type="ordered locus">CA_C3571</name>
</gene>
<accession>Q97DA9</accession>
<proteinExistence type="inferred from homology"/>
<name>FABZ_CLOAB</name>
<evidence type="ECO:0000255" key="1">
    <source>
        <dbReference type="HAMAP-Rule" id="MF_00406"/>
    </source>
</evidence>
<reference key="1">
    <citation type="journal article" date="2001" name="J. Bacteriol.">
        <title>Genome sequence and comparative analysis of the solvent-producing bacterium Clostridium acetobutylicum.</title>
        <authorList>
            <person name="Noelling J."/>
            <person name="Breton G."/>
            <person name="Omelchenko M.V."/>
            <person name="Makarova K.S."/>
            <person name="Zeng Q."/>
            <person name="Gibson R."/>
            <person name="Lee H.M."/>
            <person name="Dubois J."/>
            <person name="Qiu D."/>
            <person name="Hitti J."/>
            <person name="Wolf Y.I."/>
            <person name="Tatusov R.L."/>
            <person name="Sabathe F."/>
            <person name="Doucette-Stamm L.A."/>
            <person name="Soucaille P."/>
            <person name="Daly M.J."/>
            <person name="Bennett G.N."/>
            <person name="Koonin E.V."/>
            <person name="Smith D.R."/>
        </authorList>
    </citation>
    <scope>NUCLEOTIDE SEQUENCE [LARGE SCALE GENOMIC DNA]</scope>
    <source>
        <strain>ATCC 824 / DSM 792 / JCM 1419 / IAM 19013 / LMG 5710 / NBRC 13948 / NRRL B-527 / VKM B-1787 / 2291 / W</strain>
    </source>
</reference>